<organism>
    <name type="scientific">Escherichia coli O6:H1 (strain CFT073 / ATCC 700928 / UPEC)</name>
    <dbReference type="NCBI Taxonomy" id="199310"/>
    <lineage>
        <taxon>Bacteria</taxon>
        <taxon>Pseudomonadati</taxon>
        <taxon>Pseudomonadota</taxon>
        <taxon>Gammaproteobacteria</taxon>
        <taxon>Enterobacterales</taxon>
        <taxon>Enterobacteriaceae</taxon>
        <taxon>Escherichia</taxon>
    </lineage>
</organism>
<comment type="function">
    <text evidence="1">Involved in the degradation and recycling of damaged RNA. It is itself a target for degradation by the ATP-dependent protease Lon.</text>
</comment>
<comment type="subcellular location">
    <subcellularLocation>
        <location evidence="1">Cytoplasm</location>
    </subcellularLocation>
</comment>
<comment type="similarity">
    <text evidence="1">Belongs to the SymE family.</text>
</comment>
<reference key="1">
    <citation type="journal article" date="2002" name="Proc. Natl. Acad. Sci. U.S.A.">
        <title>Extensive mosaic structure revealed by the complete genome sequence of uropathogenic Escherichia coli.</title>
        <authorList>
            <person name="Welch R.A."/>
            <person name="Burland V."/>
            <person name="Plunkett G. III"/>
            <person name="Redford P."/>
            <person name="Roesch P."/>
            <person name="Rasko D."/>
            <person name="Buckles E.L."/>
            <person name="Liou S.-R."/>
            <person name="Boutin A."/>
            <person name="Hackett J."/>
            <person name="Stroud D."/>
            <person name="Mayhew G.F."/>
            <person name="Rose D.J."/>
            <person name="Zhou S."/>
            <person name="Schwartz D.C."/>
            <person name="Perna N.T."/>
            <person name="Mobley H.L.T."/>
            <person name="Donnenberg M.S."/>
            <person name="Blattner F.R."/>
        </authorList>
    </citation>
    <scope>NUCLEOTIDE SEQUENCE [LARGE SCALE GENOMIC DNA]</scope>
    <source>
        <strain>CFT073 / ATCC 700928 / UPEC</strain>
    </source>
</reference>
<feature type="chain" id="PRO_0000297821" description="Endoribonuclease SymE">
    <location>
        <begin position="1"/>
        <end position="113"/>
    </location>
</feature>
<feature type="domain" description="SpoVT-AbrB" evidence="2">
    <location>
        <begin position="29"/>
        <end position="74"/>
    </location>
</feature>
<dbReference type="EC" id="3.1.-.-" evidence="1"/>
<dbReference type="EMBL" id="AE014075">
    <property type="protein sequence ID" value="AAN83842.1"/>
    <property type="molecule type" value="Genomic_DNA"/>
</dbReference>
<dbReference type="PIR" id="D86133">
    <property type="entry name" value="D86133"/>
</dbReference>
<dbReference type="RefSeq" id="WP_000132630.1">
    <property type="nucleotide sequence ID" value="NZ_CP051263.1"/>
</dbReference>
<dbReference type="STRING" id="199310.c5422"/>
<dbReference type="KEGG" id="ecc:c5422"/>
<dbReference type="eggNOG" id="ENOG5031VID">
    <property type="taxonomic scope" value="Bacteria"/>
</dbReference>
<dbReference type="HOGENOM" id="CLU_151239_0_0_6"/>
<dbReference type="BioCyc" id="ECOL199310:C5422-MONOMER"/>
<dbReference type="Proteomes" id="UP000001410">
    <property type="component" value="Chromosome"/>
</dbReference>
<dbReference type="GO" id="GO:0005737">
    <property type="term" value="C:cytoplasm"/>
    <property type="evidence" value="ECO:0007669"/>
    <property type="project" value="UniProtKB-SubCell"/>
</dbReference>
<dbReference type="GO" id="GO:0003677">
    <property type="term" value="F:DNA binding"/>
    <property type="evidence" value="ECO:0007669"/>
    <property type="project" value="UniProtKB-KW"/>
</dbReference>
<dbReference type="GO" id="GO:0003723">
    <property type="term" value="F:RNA binding"/>
    <property type="evidence" value="ECO:0007669"/>
    <property type="project" value="UniProtKB-KW"/>
</dbReference>
<dbReference type="GO" id="GO:0004521">
    <property type="term" value="F:RNA endonuclease activity"/>
    <property type="evidence" value="ECO:0007669"/>
    <property type="project" value="UniProtKB-UniRule"/>
</dbReference>
<dbReference type="GO" id="GO:0016070">
    <property type="term" value="P:RNA metabolic process"/>
    <property type="evidence" value="ECO:0007669"/>
    <property type="project" value="InterPro"/>
</dbReference>
<dbReference type="HAMAP" id="MF_01193">
    <property type="entry name" value="Endoribonucl_SymE"/>
    <property type="match status" value="1"/>
</dbReference>
<dbReference type="InterPro" id="IPR007159">
    <property type="entry name" value="SpoVT-AbrB_dom"/>
</dbReference>
<dbReference type="InterPro" id="IPR014944">
    <property type="entry name" value="Toxin_SymE-like"/>
</dbReference>
<dbReference type="InterPro" id="IPR020883">
    <property type="entry name" value="TypeI_TA_SymE"/>
</dbReference>
<dbReference type="NCBIfam" id="NF010128">
    <property type="entry name" value="PRK13605.1"/>
    <property type="match status" value="1"/>
</dbReference>
<dbReference type="Pfam" id="PF08845">
    <property type="entry name" value="SymE_toxin"/>
    <property type="match status" value="1"/>
</dbReference>
<dbReference type="PROSITE" id="PS51740">
    <property type="entry name" value="SPOVT_ABRB"/>
    <property type="match status" value="1"/>
</dbReference>
<gene>
    <name evidence="1" type="primary">symE</name>
    <name type="ordered locus">c5422</name>
</gene>
<accession>Q8FA88</accession>
<name>SYME_ECOL6</name>
<proteinExistence type="inferred from homology"/>
<evidence type="ECO:0000255" key="1">
    <source>
        <dbReference type="HAMAP-Rule" id="MF_01193"/>
    </source>
</evidence>
<evidence type="ECO:0000255" key="2">
    <source>
        <dbReference type="PROSITE-ProRule" id="PRU01076"/>
    </source>
</evidence>
<keyword id="KW-0963">Cytoplasm</keyword>
<keyword id="KW-0238">DNA-binding</keyword>
<keyword id="KW-0255">Endonuclease</keyword>
<keyword id="KW-0378">Hydrolase</keyword>
<keyword id="KW-0540">Nuclease</keyword>
<keyword id="KW-1185">Reference proteome</keyword>
<keyword id="KW-0694">RNA-binding</keyword>
<sequence length="113" mass="12294">MTDTHSIAQPFEAEVSPANNRQLTVSYASRYPDYSRIPAITLKGQWLEAAGFATGTVVDVKVMEGCIVLTAQPPAAAESELMQSLRQVCKLSARKQRQVQEFIGVIAGKQKVA</sequence>
<protein>
    <recommendedName>
        <fullName evidence="1">Endoribonuclease SymE</fullName>
        <ecNumber evidence="1">3.1.-.-</ecNumber>
    </recommendedName>
</protein>